<comment type="function">
    <text evidence="3 4 6 7 8">Transcription factor which mediates CO(2) sensing. Required for CO(2)-induced white-to-opaque switching, as well as for filamentous growth and virulence. Required for both normoxic and hypoxic biofilm formation. Hypoxic biofilm formation is a major cause of perseverance and antifungal resistance during infections.</text>
</comment>
<comment type="subunit">
    <text evidence="3 5 7">Interacts with EFG1 and MSS11.</text>
</comment>
<comment type="subcellular location">
    <subcellularLocation>
        <location evidence="9">Nucleus</location>
    </subcellularLocation>
</comment>
<comment type="similarity">
    <text evidence="9">Belongs to the FLO8 family.</text>
</comment>
<keyword id="KW-0238">DNA-binding</keyword>
<keyword id="KW-0539">Nucleus</keyword>
<keyword id="KW-1185">Reference proteome</keyword>
<keyword id="KW-0804">Transcription</keyword>
<keyword id="KW-0805">Transcription regulation</keyword>
<keyword id="KW-0843">Virulence</keyword>
<accession>Q59QW5</accession>
<accession>A0A1D8PQE4</accession>
<accession>Q7Z883</accession>
<reference key="1">
    <citation type="journal article" date="2004" name="Proc. Natl. Acad. Sci. U.S.A.">
        <title>The diploid genome sequence of Candida albicans.</title>
        <authorList>
            <person name="Jones T."/>
            <person name="Federspiel N.A."/>
            <person name="Chibana H."/>
            <person name="Dungan J."/>
            <person name="Kalman S."/>
            <person name="Magee B.B."/>
            <person name="Newport G."/>
            <person name="Thorstenson Y.R."/>
            <person name="Agabian N."/>
            <person name="Magee P.T."/>
            <person name="Davis R.W."/>
            <person name="Scherer S."/>
        </authorList>
    </citation>
    <scope>NUCLEOTIDE SEQUENCE [LARGE SCALE GENOMIC DNA]</scope>
    <source>
        <strain>SC5314 / ATCC MYA-2876</strain>
    </source>
</reference>
<reference key="2">
    <citation type="journal article" date="2007" name="Genome Biol.">
        <title>Assembly of the Candida albicans genome into sixteen supercontigs aligned on the eight chromosomes.</title>
        <authorList>
            <person name="van het Hoog M."/>
            <person name="Rast T.J."/>
            <person name="Martchenko M."/>
            <person name="Grindle S."/>
            <person name="Dignard D."/>
            <person name="Hogues H."/>
            <person name="Cuomo C."/>
            <person name="Berriman M."/>
            <person name="Scherer S."/>
            <person name="Magee B.B."/>
            <person name="Whiteway M."/>
            <person name="Chibana H."/>
            <person name="Nantel A."/>
            <person name="Magee P.T."/>
        </authorList>
    </citation>
    <scope>GENOME REANNOTATION</scope>
    <source>
        <strain>SC5314 / ATCC MYA-2876</strain>
    </source>
</reference>
<reference key="3">
    <citation type="journal article" date="2013" name="Genome Biol.">
        <title>Assembly of a phased diploid Candida albicans genome facilitates allele-specific measurements and provides a simple model for repeat and indel structure.</title>
        <authorList>
            <person name="Muzzey D."/>
            <person name="Schwartz K."/>
            <person name="Weissman J.S."/>
            <person name="Sherlock G."/>
        </authorList>
    </citation>
    <scope>NUCLEOTIDE SEQUENCE [LARGE SCALE GENOMIC DNA]</scope>
    <scope>GENOME REANNOTATION</scope>
    <source>
        <strain>SC5314 / ATCC MYA-2876</strain>
    </source>
</reference>
<reference key="4">
    <citation type="journal article" date="2006" name="Mol. Biol. Cell">
        <title>The Flo8 transcription factor is essential for hyphal development and virulence in Candida albicans.</title>
        <authorList>
            <person name="Cao F."/>
            <person name="Lane S."/>
            <person name="Raniga P.P."/>
            <person name="Lu Y."/>
            <person name="Zhou Z."/>
            <person name="Ramon K."/>
            <person name="Chen J."/>
            <person name="Liu H."/>
        </authorList>
    </citation>
    <scope>FUNCTION</scope>
    <scope>INTERACTION WITH EFG1</scope>
</reference>
<reference key="5">
    <citation type="journal article" date="2007" name="Eukaryot. Cell">
        <title>Roles of Candida albicans Sfl1 in hyphal development.</title>
        <authorList>
            <person name="Li Y."/>
            <person name="Su C."/>
            <person name="Mao X."/>
            <person name="Cao F."/>
            <person name="Chen J."/>
        </authorList>
    </citation>
    <scope>FUNCTION</scope>
</reference>
<reference key="6">
    <citation type="journal article" date="2008" name="Eukaryot. Cell">
        <title>Functional mapping of the Candida albicans Efg1 regulator.</title>
        <authorList>
            <person name="Noffz C.S."/>
            <person name="Liedschulte V."/>
            <person name="Lengeler K."/>
            <person name="Ernst J.F."/>
        </authorList>
    </citation>
    <scope>INTERACTION WITH EFG1</scope>
</reference>
<reference key="7">
    <citation type="journal article" date="2009" name="Appl. Environ. Microbiol.">
        <title>Hypoxic adaptation by Efg1 regulates biofilm formation by Candida albicans.</title>
        <authorList>
            <person name="Stichternoth C."/>
            <person name="Ernst J.F."/>
        </authorList>
    </citation>
    <scope>FUNCTION</scope>
</reference>
<reference key="8">
    <citation type="journal article" date="2009" name="Eukaryot. Cell">
        <title>Mss11, a transcriptional activator, is required for hyphal development in Candida albicans.</title>
        <authorList>
            <person name="Su C."/>
            <person name="Li Y."/>
            <person name="Lu Y."/>
            <person name="Chen J."/>
        </authorList>
    </citation>
    <scope>INTERACTION WITH MSS1</scope>
    <scope>FUNCTION</scope>
    <scope>DNA-BINDING</scope>
</reference>
<reference key="9">
    <citation type="journal article" date="2012" name="Mol. Biol. Cell">
        <title>The transcription factor Flo8 mediates CO2 sensing in the human fungal pathogen Candida albicans.</title>
        <authorList>
            <person name="Du H."/>
            <person name="Guan G."/>
            <person name="Xie J."/>
            <person name="Cottier F."/>
            <person name="Sun Y."/>
            <person name="Jia W."/>
            <person name="Muhlschlegel F.A."/>
            <person name="Huang G."/>
        </authorList>
    </citation>
    <scope>FUNCTION</scope>
</reference>
<proteinExistence type="evidence at protein level"/>
<protein>
    <recommendedName>
        <fullName>Transcriptional regulator of filamentous growth FLO8</fullName>
    </recommendedName>
</protein>
<organism>
    <name type="scientific">Candida albicans (strain SC5314 / ATCC MYA-2876)</name>
    <name type="common">Yeast</name>
    <dbReference type="NCBI Taxonomy" id="237561"/>
    <lineage>
        <taxon>Eukaryota</taxon>
        <taxon>Fungi</taxon>
        <taxon>Dikarya</taxon>
        <taxon>Ascomycota</taxon>
        <taxon>Saccharomycotina</taxon>
        <taxon>Pichiomycetes</taxon>
        <taxon>Debaryomycetaceae</taxon>
        <taxon>Candida/Lodderomyces clade</taxon>
        <taxon>Candida</taxon>
    </lineage>
</organism>
<sequence length="792" mass="87127">MVPNTTKQVLNSLILDFLVKHQFQDTAKAFSKESPNLPSIPPLMDCSQGFLLEWWQVFFDLFQVRYGDGNSNNNPNNKLYHDYLRVQETQKHLFSQLPLIQQQQQQQHHFQQQQQQQGQQGQPFSQQQQRGIGVASGMQNQQHQFAPQHQGQPQGPGQTPQPPGSATNANFPINMPPNSNPQQQMFPINQQFAQMPNGQNQPSMEQQQRMAMMMKQQAMAAQRQQIPMNGLDPQQQQQMMNAVGGGPGNLNLQQQLFLQQQQQQQQQPKTTFQQQAQNQMNNLRQQAAMVAQQQQQQQQQQQQQGQLQGNLASAMGDSSSKNNSPVGARSNQQSTPQQNAAPAPSPHPSQQGQAQAQHNFQSQQQQQQQQMTKMAGSQGMKKNGQMSNGTSNNSSGRNNNALRDYQNQLMLLERQNKERLEFARNTGNSDSNPLSNGMMFAGQNQYSNSNQNQNQLPPNQQQPTPATFHPPPPPTTANGPQGQFNQKPSPATSNNSPALGNKSSPAMGNKKSKKESNSKKGKKANSNASTTANNKTSGQTTPNMSQPPSAGTEPKQPQPTEQMRQLQDKQQRPGSNTPSMGKKDFQPLTPRSEPISGETTKKKRKSGKLNDNNENSNGNSPKKQAKTNANSKNLDPIIKEEENGVLSLKKESSTSLQDQDLDLNPPLAPTQATAMSNTFNDDPFDVHLLDTQHHHQQNSNNSNHNRGQNLSNGSNNLSVSGPGMGMNNSVFGDSTHAFDINFNIDSLDDIWTTTGPGGDITGTGSGSGGAGGTDDDNFMGMNWAADPIENGD</sequence>
<gene>
    <name type="primary">FLO8</name>
    <name type="ordered locus">CAALFM_C604350CA</name>
    <name type="ORF">CaO19.1093</name>
    <name type="ORF">CaO19.8695</name>
</gene>
<feature type="chain" id="PRO_0000420157" description="Transcriptional regulator of filamentous growth FLO8">
    <location>
        <begin position="1"/>
        <end position="792"/>
    </location>
</feature>
<feature type="domain" description="LisH" evidence="1">
    <location>
        <begin position="6"/>
        <end position="38"/>
    </location>
</feature>
<feature type="region of interest" description="Disordered" evidence="2">
    <location>
        <begin position="100"/>
        <end position="184"/>
    </location>
</feature>
<feature type="region of interest" description="Disordered" evidence="2">
    <location>
        <begin position="286"/>
        <end position="400"/>
    </location>
</feature>
<feature type="region of interest" description="Disordered" evidence="2">
    <location>
        <begin position="424"/>
        <end position="676"/>
    </location>
</feature>
<feature type="region of interest" description="Disordered" evidence="2">
    <location>
        <begin position="692"/>
        <end position="724"/>
    </location>
</feature>
<feature type="region of interest" description="Disordered" evidence="2">
    <location>
        <begin position="755"/>
        <end position="777"/>
    </location>
</feature>
<feature type="compositionally biased region" description="Low complexity" evidence="2">
    <location>
        <begin position="100"/>
        <end position="129"/>
    </location>
</feature>
<feature type="compositionally biased region" description="Low complexity" evidence="2">
    <location>
        <begin position="139"/>
        <end position="158"/>
    </location>
</feature>
<feature type="compositionally biased region" description="Low complexity" evidence="2">
    <location>
        <begin position="286"/>
        <end position="308"/>
    </location>
</feature>
<feature type="compositionally biased region" description="Polar residues" evidence="2">
    <location>
        <begin position="316"/>
        <end position="325"/>
    </location>
</feature>
<feature type="compositionally biased region" description="Low complexity" evidence="2">
    <location>
        <begin position="330"/>
        <end position="370"/>
    </location>
</feature>
<feature type="compositionally biased region" description="Low complexity" evidence="2">
    <location>
        <begin position="383"/>
        <end position="400"/>
    </location>
</feature>
<feature type="compositionally biased region" description="Polar residues" evidence="2">
    <location>
        <begin position="425"/>
        <end position="435"/>
    </location>
</feature>
<feature type="compositionally biased region" description="Low complexity" evidence="2">
    <location>
        <begin position="443"/>
        <end position="467"/>
    </location>
</feature>
<feature type="compositionally biased region" description="Polar residues" evidence="2">
    <location>
        <begin position="484"/>
        <end position="506"/>
    </location>
</feature>
<feature type="compositionally biased region" description="Low complexity" evidence="2">
    <location>
        <begin position="524"/>
        <end position="537"/>
    </location>
</feature>
<feature type="compositionally biased region" description="Polar residues" evidence="2">
    <location>
        <begin position="538"/>
        <end position="549"/>
    </location>
</feature>
<feature type="compositionally biased region" description="Low complexity" evidence="2">
    <location>
        <begin position="610"/>
        <end position="619"/>
    </location>
</feature>
<feature type="compositionally biased region" description="Polar residues" evidence="2">
    <location>
        <begin position="620"/>
        <end position="633"/>
    </location>
</feature>
<feature type="compositionally biased region" description="Basic and acidic residues" evidence="2">
    <location>
        <begin position="637"/>
        <end position="652"/>
    </location>
</feature>
<feature type="compositionally biased region" description="Low complexity" evidence="2">
    <location>
        <begin position="697"/>
        <end position="721"/>
    </location>
</feature>
<feature type="compositionally biased region" description="Gly residues" evidence="2">
    <location>
        <begin position="755"/>
        <end position="772"/>
    </location>
</feature>
<evidence type="ECO:0000255" key="1">
    <source>
        <dbReference type="PROSITE-ProRule" id="PRU00126"/>
    </source>
</evidence>
<evidence type="ECO:0000256" key="2">
    <source>
        <dbReference type="SAM" id="MobiDB-lite"/>
    </source>
</evidence>
<evidence type="ECO:0000269" key="3">
    <source>
    </source>
</evidence>
<evidence type="ECO:0000269" key="4">
    <source>
    </source>
</evidence>
<evidence type="ECO:0000269" key="5">
    <source>
    </source>
</evidence>
<evidence type="ECO:0000269" key="6">
    <source>
    </source>
</evidence>
<evidence type="ECO:0000269" key="7">
    <source>
    </source>
</evidence>
<evidence type="ECO:0000269" key="8">
    <source>
    </source>
</evidence>
<evidence type="ECO:0000305" key="9"/>
<name>FLO8_CANAL</name>
<dbReference type="EMBL" id="CP017628">
    <property type="protein sequence ID" value="AOW30353.1"/>
    <property type="molecule type" value="Genomic_DNA"/>
</dbReference>
<dbReference type="RefSeq" id="XP_712106.2">
    <property type="nucleotide sequence ID" value="XM_707013.2"/>
</dbReference>
<dbReference type="SMR" id="Q59QW5"/>
<dbReference type="BioGRID" id="1229385">
    <property type="interactions" value="3"/>
</dbReference>
<dbReference type="STRING" id="237561.Q59QW5"/>
<dbReference type="EnsemblFungi" id="C6_04350C_A-T">
    <property type="protein sequence ID" value="C6_04350C_A-T-p1"/>
    <property type="gene ID" value="C6_04350C_A"/>
</dbReference>
<dbReference type="GeneID" id="3646292"/>
<dbReference type="KEGG" id="cal:CAALFM_C604350CA"/>
<dbReference type="CGD" id="CAL0000178880">
    <property type="gene designation" value="FLO8"/>
</dbReference>
<dbReference type="VEuPathDB" id="FungiDB:C6_04350C_A"/>
<dbReference type="eggNOG" id="KOG0266">
    <property type="taxonomic scope" value="Eukaryota"/>
</dbReference>
<dbReference type="HOGENOM" id="CLU_345808_0_0_1"/>
<dbReference type="InParanoid" id="Q59QW5"/>
<dbReference type="OrthoDB" id="5600002at2759"/>
<dbReference type="PHI-base" id="PHI:5056"/>
<dbReference type="PRO" id="PR:Q59QW5"/>
<dbReference type="Proteomes" id="UP000000559">
    <property type="component" value="Chromosome 6"/>
</dbReference>
<dbReference type="GO" id="GO:0005634">
    <property type="term" value="C:nucleus"/>
    <property type="evidence" value="ECO:0000318"/>
    <property type="project" value="GO_Central"/>
</dbReference>
<dbReference type="GO" id="GO:0003677">
    <property type="term" value="F:DNA binding"/>
    <property type="evidence" value="ECO:0007669"/>
    <property type="project" value="UniProtKB-KW"/>
</dbReference>
<dbReference type="GO" id="GO:0001216">
    <property type="term" value="F:DNA-binding transcription activator activity"/>
    <property type="evidence" value="ECO:0000314"/>
    <property type="project" value="CGD"/>
</dbReference>
<dbReference type="GO" id="GO:0036187">
    <property type="term" value="P:cell growth mode switching, budding to filamentous"/>
    <property type="evidence" value="ECO:0000315"/>
    <property type="project" value="CGD"/>
</dbReference>
<dbReference type="GO" id="GO:0048869">
    <property type="term" value="P:cellular developmental process"/>
    <property type="evidence" value="ECO:0000315"/>
    <property type="project" value="CGD"/>
</dbReference>
<dbReference type="GO" id="GO:0030447">
    <property type="term" value="P:filamentous growth"/>
    <property type="evidence" value="ECO:0000315"/>
    <property type="project" value="CGD"/>
</dbReference>
<dbReference type="GO" id="GO:0044182">
    <property type="term" value="P:filamentous growth of a population of unicellular organisms"/>
    <property type="evidence" value="ECO:0000315"/>
    <property type="project" value="CGD"/>
</dbReference>
<dbReference type="GO" id="GO:0036180">
    <property type="term" value="P:filamentous growth of a population of unicellular organisms in response to biotic stimulus"/>
    <property type="evidence" value="ECO:0000315"/>
    <property type="project" value="CGD"/>
</dbReference>
<dbReference type="GO" id="GO:0036171">
    <property type="term" value="P:filamentous growth of a population of unicellular organisms in response to chemical stimulus"/>
    <property type="evidence" value="ECO:0000315"/>
    <property type="project" value="CGD"/>
</dbReference>
<dbReference type="GO" id="GO:0030448">
    <property type="term" value="P:hyphal growth"/>
    <property type="evidence" value="ECO:0000315"/>
    <property type="project" value="CGD"/>
</dbReference>
<dbReference type="GO" id="GO:1900445">
    <property type="term" value="P:positive regulation of filamentous growth of a population of unicellular organisms in response to biotic stimulus"/>
    <property type="evidence" value="ECO:0000315"/>
    <property type="project" value="CGD"/>
</dbReference>
<dbReference type="GO" id="GO:1900439">
    <property type="term" value="P:positive regulation of filamentous growth of a population of unicellular organisms in response to chemical stimulus"/>
    <property type="evidence" value="ECO:0000315"/>
    <property type="project" value="CGD"/>
</dbReference>
<dbReference type="GO" id="GO:1900743">
    <property type="term" value="P:positive regulation of filamentous growth of a population of unicellular organisms in response to pH"/>
    <property type="evidence" value="ECO:0000315"/>
    <property type="project" value="CGD"/>
</dbReference>
<dbReference type="GO" id="GO:1900241">
    <property type="term" value="P:positive regulation of phenotypic switching"/>
    <property type="evidence" value="ECO:0000315"/>
    <property type="project" value="CGD"/>
</dbReference>
<dbReference type="GO" id="GO:0045944">
    <property type="term" value="P:positive regulation of transcription by RNA polymerase II"/>
    <property type="evidence" value="ECO:0000314"/>
    <property type="project" value="CGD"/>
</dbReference>
<dbReference type="GO" id="GO:0010037">
    <property type="term" value="P:response to carbon dioxide"/>
    <property type="evidence" value="ECO:0000315"/>
    <property type="project" value="CGD"/>
</dbReference>
<dbReference type="GO" id="GO:0016126">
    <property type="term" value="P:sterol biosynthetic process"/>
    <property type="evidence" value="ECO:0000315"/>
    <property type="project" value="CGD"/>
</dbReference>
<dbReference type="InterPro" id="IPR006594">
    <property type="entry name" value="LisH"/>
</dbReference>
<dbReference type="PANTHER" id="PTHR45093:SF2">
    <property type="entry name" value="LISH DOMAIN-CONTAINING PROTEIN"/>
    <property type="match status" value="1"/>
</dbReference>
<dbReference type="PANTHER" id="PTHR45093">
    <property type="entry name" value="TRANSCRIPTION ACTIVATOR MSS11"/>
    <property type="match status" value="1"/>
</dbReference>
<dbReference type="Pfam" id="PF08513">
    <property type="entry name" value="LisH"/>
    <property type="match status" value="1"/>
</dbReference>
<dbReference type="SMART" id="SM00667">
    <property type="entry name" value="LisH"/>
    <property type="match status" value="1"/>
</dbReference>
<dbReference type="PROSITE" id="PS50896">
    <property type="entry name" value="LISH"/>
    <property type="match status" value="1"/>
</dbReference>